<dbReference type="EC" id="2.7.11.30" evidence="14"/>
<dbReference type="EMBL" id="Z23143">
    <property type="protein sequence ID" value="CAA80674.1"/>
    <property type="molecule type" value="mRNA"/>
</dbReference>
<dbReference type="EMBL" id="AK086130">
    <property type="protein sequence ID" value="BAC39617.1"/>
    <property type="molecule type" value="mRNA"/>
</dbReference>
<dbReference type="EMBL" id="AK162844">
    <property type="protein sequence ID" value="BAE37078.1"/>
    <property type="molecule type" value="mRNA"/>
</dbReference>
<dbReference type="EMBL" id="BC065106">
    <property type="protein sequence ID" value="AAH65106.1"/>
    <property type="molecule type" value="mRNA"/>
</dbReference>
<dbReference type="EMBL" id="BC065143">
    <property type="protein sequence ID" value="AAH65143.1"/>
    <property type="molecule type" value="mRNA"/>
</dbReference>
<dbReference type="CCDS" id="CCDS17874.1"/>
<dbReference type="PIR" id="A53444">
    <property type="entry name" value="A53444"/>
</dbReference>
<dbReference type="RefSeq" id="NP_001264145.1">
    <property type="nucleotide sequence ID" value="NM_001277216.3"/>
</dbReference>
<dbReference type="RefSeq" id="NP_001264146.1">
    <property type="nucleotide sequence ID" value="NM_001277217.3"/>
</dbReference>
<dbReference type="RefSeq" id="NP_001264147.1">
    <property type="nucleotide sequence ID" value="NM_001277218.2"/>
</dbReference>
<dbReference type="RefSeq" id="NP_001264149.1">
    <property type="nucleotide sequence ID" value="NM_001277220.1"/>
</dbReference>
<dbReference type="RefSeq" id="NP_001341972.1">
    <property type="nucleotide sequence ID" value="NM_001355043.2"/>
</dbReference>
<dbReference type="RefSeq" id="NP_001415322.1">
    <property type="nucleotide sequence ID" value="NM_001428393.1"/>
</dbReference>
<dbReference type="RefSeq" id="NP_001415323.1">
    <property type="nucleotide sequence ID" value="NM_001428394.1"/>
</dbReference>
<dbReference type="RefSeq" id="NP_001415324.1">
    <property type="nucleotide sequence ID" value="NM_001428395.1"/>
</dbReference>
<dbReference type="RefSeq" id="NP_001415325.1">
    <property type="nucleotide sequence ID" value="NM_001428396.1"/>
</dbReference>
<dbReference type="RefSeq" id="NP_001415326.1">
    <property type="nucleotide sequence ID" value="NM_001428397.1"/>
</dbReference>
<dbReference type="RefSeq" id="NP_001415327.1">
    <property type="nucleotide sequence ID" value="NM_001428398.1"/>
</dbReference>
<dbReference type="RefSeq" id="NP_031586.1">
    <property type="nucleotide sequence ID" value="NM_007560.5"/>
</dbReference>
<dbReference type="RefSeq" id="XP_006501002.1">
    <property type="nucleotide sequence ID" value="XM_006500939.3"/>
</dbReference>
<dbReference type="RefSeq" id="XP_006501003.1">
    <property type="nucleotide sequence ID" value="XM_006500940.3"/>
</dbReference>
<dbReference type="RefSeq" id="XP_006501005.1">
    <property type="nucleotide sequence ID" value="XM_006500942.1"/>
</dbReference>
<dbReference type="RefSeq" id="XP_006501006.1">
    <property type="nucleotide sequence ID" value="XM_006500943.5"/>
</dbReference>
<dbReference type="RefSeq" id="XP_006501007.1">
    <property type="nucleotide sequence ID" value="XM_006500944.2"/>
</dbReference>
<dbReference type="RefSeq" id="XP_011238303.1">
    <property type="nucleotide sequence ID" value="XM_011240001.1"/>
</dbReference>
<dbReference type="RefSeq" id="XP_011238304.1">
    <property type="nucleotide sequence ID" value="XM_011240002.2"/>
</dbReference>
<dbReference type="RefSeq" id="XP_030108258.1">
    <property type="nucleotide sequence ID" value="XM_030252398.2"/>
</dbReference>
<dbReference type="RefSeq" id="XP_036018764.1">
    <property type="nucleotide sequence ID" value="XM_036162871.1"/>
</dbReference>
<dbReference type="PDB" id="3EVS">
    <property type="method" value="X-ray"/>
    <property type="resolution" value="2.10 A"/>
    <property type="chains" value="C=14-126"/>
</dbReference>
<dbReference type="PDBsum" id="3EVS"/>
<dbReference type="SMR" id="P36898"/>
<dbReference type="DIP" id="DIP-252N"/>
<dbReference type="FunCoup" id="P36898">
    <property type="interactions" value="992"/>
</dbReference>
<dbReference type="IntAct" id="P36898">
    <property type="interactions" value="1"/>
</dbReference>
<dbReference type="MINT" id="P36898"/>
<dbReference type="STRING" id="10090.ENSMUSP00000029948"/>
<dbReference type="BindingDB" id="P36898"/>
<dbReference type="GlyGen" id="P36898">
    <property type="glycosylation" value="1 site, 1 N-linked glycan (1 site)"/>
</dbReference>
<dbReference type="PhosphoSitePlus" id="P36898"/>
<dbReference type="PaxDb" id="10090-ENSMUSP00000029948"/>
<dbReference type="ProteomicsDB" id="273694"/>
<dbReference type="Antibodypedia" id="4045">
    <property type="antibodies" value="661 antibodies from 36 providers"/>
</dbReference>
<dbReference type="DNASU" id="12167"/>
<dbReference type="Ensembl" id="ENSMUST00000029948.15">
    <property type="protein sequence ID" value="ENSMUSP00000029948.8"/>
    <property type="gene ID" value="ENSMUSG00000052430.16"/>
</dbReference>
<dbReference type="Ensembl" id="ENSMUST00000098568.8">
    <property type="protein sequence ID" value="ENSMUSP00000096167.2"/>
    <property type="gene ID" value="ENSMUSG00000052430.16"/>
</dbReference>
<dbReference type="Ensembl" id="ENSMUST00000106230.2">
    <property type="protein sequence ID" value="ENSMUSP00000101837.2"/>
    <property type="gene ID" value="ENSMUSG00000052430.16"/>
</dbReference>
<dbReference type="Ensembl" id="ENSMUST00000106232.8">
    <property type="protein sequence ID" value="ENSMUSP00000101839.2"/>
    <property type="gene ID" value="ENSMUSG00000052430.16"/>
</dbReference>
<dbReference type="GeneID" id="12167"/>
<dbReference type="KEGG" id="mmu:12167"/>
<dbReference type="UCSC" id="uc008rog.2">
    <property type="organism name" value="mouse"/>
</dbReference>
<dbReference type="AGR" id="MGI:107191"/>
<dbReference type="CTD" id="658"/>
<dbReference type="MGI" id="MGI:107191">
    <property type="gene designation" value="Bmpr1b"/>
</dbReference>
<dbReference type="VEuPathDB" id="HostDB:ENSMUSG00000052430"/>
<dbReference type="eggNOG" id="KOG2052">
    <property type="taxonomic scope" value="Eukaryota"/>
</dbReference>
<dbReference type="GeneTree" id="ENSGT00940000155919"/>
<dbReference type="HOGENOM" id="CLU_000288_8_1_1"/>
<dbReference type="InParanoid" id="P36898"/>
<dbReference type="OMA" id="RRTIACC"/>
<dbReference type="OrthoDB" id="69842at2759"/>
<dbReference type="PhylomeDB" id="P36898"/>
<dbReference type="TreeFam" id="TF314724"/>
<dbReference type="BRENDA" id="2.7.10.2">
    <property type="organism ID" value="3474"/>
</dbReference>
<dbReference type="Reactome" id="R-MMU-201451">
    <property type="pathway name" value="Signaling by BMP"/>
</dbReference>
<dbReference type="BioGRID-ORCS" id="12167">
    <property type="hits" value="1 hit in 80 CRISPR screens"/>
</dbReference>
<dbReference type="ChiTaRS" id="Bmpr1b">
    <property type="organism name" value="mouse"/>
</dbReference>
<dbReference type="EvolutionaryTrace" id="P36898"/>
<dbReference type="PRO" id="PR:P36898"/>
<dbReference type="Proteomes" id="UP000000589">
    <property type="component" value="Chromosome 3"/>
</dbReference>
<dbReference type="RNAct" id="P36898">
    <property type="molecule type" value="protein"/>
</dbReference>
<dbReference type="Bgee" id="ENSMUSG00000052430">
    <property type="expression patterns" value="Expressed in cumulus cell and 279 other cell types or tissues"/>
</dbReference>
<dbReference type="ExpressionAtlas" id="P36898">
    <property type="expression patterns" value="baseline and differential"/>
</dbReference>
<dbReference type="GO" id="GO:0030425">
    <property type="term" value="C:dendrite"/>
    <property type="evidence" value="ECO:0007669"/>
    <property type="project" value="Ensembl"/>
</dbReference>
<dbReference type="GO" id="GO:0043025">
    <property type="term" value="C:neuronal cell body"/>
    <property type="evidence" value="ECO:0007669"/>
    <property type="project" value="Ensembl"/>
</dbReference>
<dbReference type="GO" id="GO:0005886">
    <property type="term" value="C:plasma membrane"/>
    <property type="evidence" value="ECO:0000314"/>
    <property type="project" value="UniProtKB"/>
</dbReference>
<dbReference type="GO" id="GO:0005524">
    <property type="term" value="F:ATP binding"/>
    <property type="evidence" value="ECO:0007669"/>
    <property type="project" value="UniProtKB-KW"/>
</dbReference>
<dbReference type="GO" id="GO:0036122">
    <property type="term" value="F:BMP binding"/>
    <property type="evidence" value="ECO:0000314"/>
    <property type="project" value="MGI"/>
</dbReference>
<dbReference type="GO" id="GO:0098821">
    <property type="term" value="F:BMP receptor activity"/>
    <property type="evidence" value="ECO:0000314"/>
    <property type="project" value="MGI"/>
</dbReference>
<dbReference type="GO" id="GO:0046872">
    <property type="term" value="F:metal ion binding"/>
    <property type="evidence" value="ECO:0007669"/>
    <property type="project" value="UniProtKB-KW"/>
</dbReference>
<dbReference type="GO" id="GO:0046332">
    <property type="term" value="F:SMAD binding"/>
    <property type="evidence" value="ECO:0007669"/>
    <property type="project" value="Ensembl"/>
</dbReference>
<dbReference type="GO" id="GO:0005024">
    <property type="term" value="F:transforming growth factor beta receptor activity"/>
    <property type="evidence" value="ECO:0000304"/>
    <property type="project" value="MGI"/>
</dbReference>
<dbReference type="GO" id="GO:0005025">
    <property type="term" value="F:transforming growth factor beta receptor activity, type I"/>
    <property type="evidence" value="ECO:0000315"/>
    <property type="project" value="MGI"/>
</dbReference>
<dbReference type="GO" id="GO:0004675">
    <property type="term" value="F:transmembrane receptor protein serine/threonine kinase activity"/>
    <property type="evidence" value="ECO:0000315"/>
    <property type="project" value="UniProtKB"/>
</dbReference>
<dbReference type="GO" id="GO:0030509">
    <property type="term" value="P:BMP signaling pathway"/>
    <property type="evidence" value="ECO:0000314"/>
    <property type="project" value="UniProtKB"/>
</dbReference>
<dbReference type="GO" id="GO:0060348">
    <property type="term" value="P:bone development"/>
    <property type="evidence" value="ECO:0000315"/>
    <property type="project" value="MGI"/>
</dbReference>
<dbReference type="GO" id="GO:0043010">
    <property type="term" value="P:camera-type eye development"/>
    <property type="evidence" value="ECO:0000316"/>
    <property type="project" value="MGI"/>
</dbReference>
<dbReference type="GO" id="GO:0001502">
    <property type="term" value="P:cartilage condensation"/>
    <property type="evidence" value="ECO:0000315"/>
    <property type="project" value="MGI"/>
</dbReference>
<dbReference type="GO" id="GO:0030154">
    <property type="term" value="P:cell differentiation"/>
    <property type="evidence" value="ECO:0000315"/>
    <property type="project" value="MGI"/>
</dbReference>
<dbReference type="GO" id="GO:0007178">
    <property type="term" value="P:cell surface receptor protein serine/threonine kinase signaling pathway"/>
    <property type="evidence" value="ECO:0000316"/>
    <property type="project" value="MGI"/>
</dbReference>
<dbReference type="GO" id="GO:0071363">
    <property type="term" value="P:cellular response to growth factor stimulus"/>
    <property type="evidence" value="ECO:0000314"/>
    <property type="project" value="UniProtKB"/>
</dbReference>
<dbReference type="GO" id="GO:0021953">
    <property type="term" value="P:central nervous system neuron differentiation"/>
    <property type="evidence" value="ECO:0000316"/>
    <property type="project" value="MGI"/>
</dbReference>
<dbReference type="GO" id="GO:0002063">
    <property type="term" value="P:chondrocyte development"/>
    <property type="evidence" value="ECO:0000250"/>
    <property type="project" value="AgBase"/>
</dbReference>
<dbReference type="GO" id="GO:0002062">
    <property type="term" value="P:chondrocyte differentiation"/>
    <property type="evidence" value="ECO:0000315"/>
    <property type="project" value="UniProtKB"/>
</dbReference>
<dbReference type="GO" id="GO:0009953">
    <property type="term" value="P:dorsal/ventral pattern formation"/>
    <property type="evidence" value="ECO:0000316"/>
    <property type="project" value="MGI"/>
</dbReference>
<dbReference type="GO" id="GO:0060350">
    <property type="term" value="P:endochondral bone morphogenesis"/>
    <property type="evidence" value="ECO:0000250"/>
    <property type="project" value="AgBase"/>
</dbReference>
<dbReference type="GO" id="GO:0006703">
    <property type="term" value="P:estrogen biosynthetic process"/>
    <property type="evidence" value="ECO:0000303"/>
    <property type="project" value="UniProtKB"/>
</dbReference>
<dbReference type="GO" id="GO:0001654">
    <property type="term" value="P:eye development"/>
    <property type="evidence" value="ECO:0000315"/>
    <property type="project" value="MGI"/>
</dbReference>
<dbReference type="GO" id="GO:0006954">
    <property type="term" value="P:inflammatory response"/>
    <property type="evidence" value="ECO:0000270"/>
    <property type="project" value="UniProtKB"/>
</dbReference>
<dbReference type="GO" id="GO:1902731">
    <property type="term" value="P:negative regulation of chondrocyte proliferation"/>
    <property type="evidence" value="ECO:0000250"/>
    <property type="project" value="AgBase"/>
</dbReference>
<dbReference type="GO" id="GO:0001649">
    <property type="term" value="P:osteoblast differentiation"/>
    <property type="evidence" value="ECO:0000314"/>
    <property type="project" value="MGI"/>
</dbReference>
<dbReference type="GO" id="GO:0001550">
    <property type="term" value="P:ovarian cumulus expansion"/>
    <property type="evidence" value="ECO:0000315"/>
    <property type="project" value="UniProtKB"/>
</dbReference>
<dbReference type="GO" id="GO:0042698">
    <property type="term" value="P:ovulation cycle"/>
    <property type="evidence" value="ECO:0000315"/>
    <property type="project" value="UniProtKB"/>
</dbReference>
<dbReference type="GO" id="GO:0030501">
    <property type="term" value="P:positive regulation of bone mineralization"/>
    <property type="evidence" value="ECO:0007669"/>
    <property type="project" value="Ensembl"/>
</dbReference>
<dbReference type="GO" id="GO:0061036">
    <property type="term" value="P:positive regulation of cartilage development"/>
    <property type="evidence" value="ECO:0000250"/>
    <property type="project" value="AgBase"/>
</dbReference>
<dbReference type="GO" id="GO:0032332">
    <property type="term" value="P:positive regulation of chondrocyte differentiation"/>
    <property type="evidence" value="ECO:0000250"/>
    <property type="project" value="UniProtKB"/>
</dbReference>
<dbReference type="GO" id="GO:1902043">
    <property type="term" value="P:positive regulation of extrinsic apoptotic signaling pathway via death domain receptors"/>
    <property type="evidence" value="ECO:0000316"/>
    <property type="project" value="MGI"/>
</dbReference>
<dbReference type="GO" id="GO:0010628">
    <property type="term" value="P:positive regulation of gene expression"/>
    <property type="evidence" value="ECO:0007669"/>
    <property type="project" value="Ensembl"/>
</dbReference>
<dbReference type="GO" id="GO:0045669">
    <property type="term" value="P:positive regulation of osteoblast differentiation"/>
    <property type="evidence" value="ECO:0007669"/>
    <property type="project" value="Ensembl"/>
</dbReference>
<dbReference type="GO" id="GO:0045944">
    <property type="term" value="P:positive regulation of transcription by RNA polymerase II"/>
    <property type="evidence" value="ECO:0007669"/>
    <property type="project" value="Ensembl"/>
</dbReference>
<dbReference type="GO" id="GO:0030166">
    <property type="term" value="P:proteoglycan biosynthetic process"/>
    <property type="evidence" value="ECO:0000250"/>
    <property type="project" value="AgBase"/>
</dbReference>
<dbReference type="GO" id="GO:0060041">
    <property type="term" value="P:retina development in camera-type eye"/>
    <property type="evidence" value="ECO:0000315"/>
    <property type="project" value="MGI"/>
</dbReference>
<dbReference type="GO" id="GO:0031290">
    <property type="term" value="P:retinal ganglion cell axon guidance"/>
    <property type="evidence" value="ECO:0000315"/>
    <property type="project" value="MGI"/>
</dbReference>
<dbReference type="GO" id="GO:0007179">
    <property type="term" value="P:transforming growth factor beta receptor signaling pathway"/>
    <property type="evidence" value="ECO:0000304"/>
    <property type="project" value="MGI"/>
</dbReference>
<dbReference type="CDD" id="cd14219">
    <property type="entry name" value="STKc_BMPR1b"/>
    <property type="match status" value="1"/>
</dbReference>
<dbReference type="CDD" id="cd23613">
    <property type="entry name" value="TFP_LU_ECD_BMPR1B"/>
    <property type="match status" value="1"/>
</dbReference>
<dbReference type="FunFam" id="1.10.510.10:FF:000018">
    <property type="entry name" value="Receptor protein serine/threonine kinase"/>
    <property type="match status" value="1"/>
</dbReference>
<dbReference type="FunFam" id="2.10.60.10:FF:000001">
    <property type="entry name" value="Receptor protein serine/threonine kinase"/>
    <property type="match status" value="1"/>
</dbReference>
<dbReference type="FunFam" id="3.30.200.20:FF:000055">
    <property type="entry name" value="Receptor protein serine/threonine kinase"/>
    <property type="match status" value="1"/>
</dbReference>
<dbReference type="Gene3D" id="2.10.60.10">
    <property type="entry name" value="CD59"/>
    <property type="match status" value="1"/>
</dbReference>
<dbReference type="Gene3D" id="3.30.200.20">
    <property type="entry name" value="Phosphorylase Kinase, domain 1"/>
    <property type="match status" value="1"/>
</dbReference>
<dbReference type="Gene3D" id="1.10.510.10">
    <property type="entry name" value="Transferase(Phosphotransferase) domain 1"/>
    <property type="match status" value="1"/>
</dbReference>
<dbReference type="InterPro" id="IPR000472">
    <property type="entry name" value="Activin_recp"/>
</dbReference>
<dbReference type="InterPro" id="IPR003605">
    <property type="entry name" value="GS_dom"/>
</dbReference>
<dbReference type="InterPro" id="IPR011009">
    <property type="entry name" value="Kinase-like_dom_sf"/>
</dbReference>
<dbReference type="InterPro" id="IPR000719">
    <property type="entry name" value="Prot_kinase_dom"/>
</dbReference>
<dbReference type="InterPro" id="IPR017441">
    <property type="entry name" value="Protein_kinase_ATP_BS"/>
</dbReference>
<dbReference type="InterPro" id="IPR001245">
    <property type="entry name" value="Ser-Thr/Tyr_kinase_cat_dom"/>
</dbReference>
<dbReference type="InterPro" id="IPR008271">
    <property type="entry name" value="Ser/Thr_kinase_AS"/>
</dbReference>
<dbReference type="InterPro" id="IPR045860">
    <property type="entry name" value="Snake_toxin-like_sf"/>
</dbReference>
<dbReference type="InterPro" id="IPR000333">
    <property type="entry name" value="TGFB_receptor"/>
</dbReference>
<dbReference type="PANTHER" id="PTHR23255:SF62">
    <property type="entry name" value="BONE MORPHOGENETIC PROTEIN RECEPTOR TYPE-1B"/>
    <property type="match status" value="1"/>
</dbReference>
<dbReference type="PANTHER" id="PTHR23255">
    <property type="entry name" value="TRANSFORMING GROWTH FACTOR-BETA RECEPTOR TYPE I AND II"/>
    <property type="match status" value="1"/>
</dbReference>
<dbReference type="Pfam" id="PF01064">
    <property type="entry name" value="Activin_recp"/>
    <property type="match status" value="1"/>
</dbReference>
<dbReference type="Pfam" id="PF07714">
    <property type="entry name" value="PK_Tyr_Ser-Thr"/>
    <property type="match status" value="1"/>
</dbReference>
<dbReference type="Pfam" id="PF08515">
    <property type="entry name" value="TGF_beta_GS"/>
    <property type="match status" value="1"/>
</dbReference>
<dbReference type="SMART" id="SM00467">
    <property type="entry name" value="GS"/>
    <property type="match status" value="1"/>
</dbReference>
<dbReference type="SMART" id="SM00220">
    <property type="entry name" value="S_TKc"/>
    <property type="match status" value="1"/>
</dbReference>
<dbReference type="SUPFAM" id="SSF56112">
    <property type="entry name" value="Protein kinase-like (PK-like)"/>
    <property type="match status" value="1"/>
</dbReference>
<dbReference type="SUPFAM" id="SSF57302">
    <property type="entry name" value="Snake toxin-like"/>
    <property type="match status" value="1"/>
</dbReference>
<dbReference type="PROSITE" id="PS51256">
    <property type="entry name" value="GS"/>
    <property type="match status" value="1"/>
</dbReference>
<dbReference type="PROSITE" id="PS00107">
    <property type="entry name" value="PROTEIN_KINASE_ATP"/>
    <property type="match status" value="1"/>
</dbReference>
<dbReference type="PROSITE" id="PS50011">
    <property type="entry name" value="PROTEIN_KINASE_DOM"/>
    <property type="match status" value="1"/>
</dbReference>
<dbReference type="PROSITE" id="PS00108">
    <property type="entry name" value="PROTEIN_KINASE_ST"/>
    <property type="match status" value="1"/>
</dbReference>
<evidence type="ECO:0000250" key="1"/>
<evidence type="ECO:0000250" key="2">
    <source>
        <dbReference type="UniProtKB" id="O00238"/>
    </source>
</evidence>
<evidence type="ECO:0000255" key="3"/>
<evidence type="ECO:0000255" key="4">
    <source>
        <dbReference type="PROSITE-ProRule" id="PRU00159"/>
    </source>
</evidence>
<evidence type="ECO:0000255" key="5">
    <source>
        <dbReference type="PROSITE-ProRule" id="PRU00585"/>
    </source>
</evidence>
<evidence type="ECO:0000255" key="6">
    <source>
        <dbReference type="PROSITE-ProRule" id="PRU10027"/>
    </source>
</evidence>
<evidence type="ECO:0000256" key="7">
    <source>
        <dbReference type="SAM" id="MobiDB-lite"/>
    </source>
</evidence>
<evidence type="ECO:0000269" key="8">
    <source>
    </source>
</evidence>
<evidence type="ECO:0000269" key="9">
    <source>
    </source>
</evidence>
<evidence type="ECO:0000269" key="10">
    <source>
    </source>
</evidence>
<evidence type="ECO:0000269" key="11">
    <source>
    </source>
</evidence>
<evidence type="ECO:0000269" key="12">
    <source>
    </source>
</evidence>
<evidence type="ECO:0000305" key="13"/>
<evidence type="ECO:0000305" key="14">
    <source>
    </source>
</evidence>
<evidence type="ECO:0007829" key="15">
    <source>
        <dbReference type="PDB" id="3EVS"/>
    </source>
</evidence>
<keyword id="KW-0002">3D-structure</keyword>
<keyword id="KW-0067">ATP-binding</keyword>
<keyword id="KW-1003">Cell membrane</keyword>
<keyword id="KW-0891">Chondrogenesis</keyword>
<keyword id="KW-1015">Disulfide bond</keyword>
<keyword id="KW-0418">Kinase</keyword>
<keyword id="KW-0460">Magnesium</keyword>
<keyword id="KW-0464">Manganese</keyword>
<keyword id="KW-0472">Membrane</keyword>
<keyword id="KW-0479">Metal-binding</keyword>
<keyword id="KW-0547">Nucleotide-binding</keyword>
<keyword id="KW-0675">Receptor</keyword>
<keyword id="KW-1185">Reference proteome</keyword>
<keyword id="KW-0723">Serine/threonine-protein kinase</keyword>
<keyword id="KW-0732">Signal</keyword>
<keyword id="KW-0808">Transferase</keyword>
<keyword id="KW-0812">Transmembrane</keyword>
<keyword id="KW-1133">Transmembrane helix</keyword>
<gene>
    <name type="primary">Bmpr1b</name>
    <name type="synonym">Acvrlk6</name>
</gene>
<reference key="1">
    <citation type="journal article" date="1994" name="Science">
        <title>Characterization of type I receptors for transforming growth factor-beta and activin.</title>
        <authorList>
            <person name="ten Dijke P."/>
            <person name="Yamashita H."/>
            <person name="Ichijo H."/>
            <person name="Franzen P."/>
            <person name="Laiho M."/>
            <person name="Miyazono K."/>
            <person name="Heldin C.-H."/>
        </authorList>
    </citation>
    <scope>NUCLEOTIDE SEQUENCE [MRNA]</scope>
</reference>
<reference key="2">
    <citation type="journal article" date="2005" name="Science">
        <title>The transcriptional landscape of the mammalian genome.</title>
        <authorList>
            <person name="Carninci P."/>
            <person name="Kasukawa T."/>
            <person name="Katayama S."/>
            <person name="Gough J."/>
            <person name="Frith M.C."/>
            <person name="Maeda N."/>
            <person name="Oyama R."/>
            <person name="Ravasi T."/>
            <person name="Lenhard B."/>
            <person name="Wells C."/>
            <person name="Kodzius R."/>
            <person name="Shimokawa K."/>
            <person name="Bajic V.B."/>
            <person name="Brenner S.E."/>
            <person name="Batalov S."/>
            <person name="Forrest A.R."/>
            <person name="Zavolan M."/>
            <person name="Davis M.J."/>
            <person name="Wilming L.G."/>
            <person name="Aidinis V."/>
            <person name="Allen J.E."/>
            <person name="Ambesi-Impiombato A."/>
            <person name="Apweiler R."/>
            <person name="Aturaliya R.N."/>
            <person name="Bailey T.L."/>
            <person name="Bansal M."/>
            <person name="Baxter L."/>
            <person name="Beisel K.W."/>
            <person name="Bersano T."/>
            <person name="Bono H."/>
            <person name="Chalk A.M."/>
            <person name="Chiu K.P."/>
            <person name="Choudhary V."/>
            <person name="Christoffels A."/>
            <person name="Clutterbuck D.R."/>
            <person name="Crowe M.L."/>
            <person name="Dalla E."/>
            <person name="Dalrymple B.P."/>
            <person name="de Bono B."/>
            <person name="Della Gatta G."/>
            <person name="di Bernardo D."/>
            <person name="Down T."/>
            <person name="Engstrom P."/>
            <person name="Fagiolini M."/>
            <person name="Faulkner G."/>
            <person name="Fletcher C.F."/>
            <person name="Fukushima T."/>
            <person name="Furuno M."/>
            <person name="Futaki S."/>
            <person name="Gariboldi M."/>
            <person name="Georgii-Hemming P."/>
            <person name="Gingeras T.R."/>
            <person name="Gojobori T."/>
            <person name="Green R.E."/>
            <person name="Gustincich S."/>
            <person name="Harbers M."/>
            <person name="Hayashi Y."/>
            <person name="Hensch T.K."/>
            <person name="Hirokawa N."/>
            <person name="Hill D."/>
            <person name="Huminiecki L."/>
            <person name="Iacono M."/>
            <person name="Ikeo K."/>
            <person name="Iwama A."/>
            <person name="Ishikawa T."/>
            <person name="Jakt M."/>
            <person name="Kanapin A."/>
            <person name="Katoh M."/>
            <person name="Kawasawa Y."/>
            <person name="Kelso J."/>
            <person name="Kitamura H."/>
            <person name="Kitano H."/>
            <person name="Kollias G."/>
            <person name="Krishnan S.P."/>
            <person name="Kruger A."/>
            <person name="Kummerfeld S.K."/>
            <person name="Kurochkin I.V."/>
            <person name="Lareau L.F."/>
            <person name="Lazarevic D."/>
            <person name="Lipovich L."/>
            <person name="Liu J."/>
            <person name="Liuni S."/>
            <person name="McWilliam S."/>
            <person name="Madan Babu M."/>
            <person name="Madera M."/>
            <person name="Marchionni L."/>
            <person name="Matsuda H."/>
            <person name="Matsuzawa S."/>
            <person name="Miki H."/>
            <person name="Mignone F."/>
            <person name="Miyake S."/>
            <person name="Morris K."/>
            <person name="Mottagui-Tabar S."/>
            <person name="Mulder N."/>
            <person name="Nakano N."/>
            <person name="Nakauchi H."/>
            <person name="Ng P."/>
            <person name="Nilsson R."/>
            <person name="Nishiguchi S."/>
            <person name="Nishikawa S."/>
            <person name="Nori F."/>
            <person name="Ohara O."/>
            <person name="Okazaki Y."/>
            <person name="Orlando V."/>
            <person name="Pang K.C."/>
            <person name="Pavan W.J."/>
            <person name="Pavesi G."/>
            <person name="Pesole G."/>
            <person name="Petrovsky N."/>
            <person name="Piazza S."/>
            <person name="Reed J."/>
            <person name="Reid J.F."/>
            <person name="Ring B.Z."/>
            <person name="Ringwald M."/>
            <person name="Rost B."/>
            <person name="Ruan Y."/>
            <person name="Salzberg S.L."/>
            <person name="Sandelin A."/>
            <person name="Schneider C."/>
            <person name="Schoenbach C."/>
            <person name="Sekiguchi K."/>
            <person name="Semple C.A."/>
            <person name="Seno S."/>
            <person name="Sessa L."/>
            <person name="Sheng Y."/>
            <person name="Shibata Y."/>
            <person name="Shimada H."/>
            <person name="Shimada K."/>
            <person name="Silva D."/>
            <person name="Sinclair B."/>
            <person name="Sperling S."/>
            <person name="Stupka E."/>
            <person name="Sugiura K."/>
            <person name="Sultana R."/>
            <person name="Takenaka Y."/>
            <person name="Taki K."/>
            <person name="Tammoja K."/>
            <person name="Tan S.L."/>
            <person name="Tang S."/>
            <person name="Taylor M.S."/>
            <person name="Tegner J."/>
            <person name="Teichmann S.A."/>
            <person name="Ueda H.R."/>
            <person name="van Nimwegen E."/>
            <person name="Verardo R."/>
            <person name="Wei C.L."/>
            <person name="Yagi K."/>
            <person name="Yamanishi H."/>
            <person name="Zabarovsky E."/>
            <person name="Zhu S."/>
            <person name="Zimmer A."/>
            <person name="Hide W."/>
            <person name="Bult C."/>
            <person name="Grimmond S.M."/>
            <person name="Teasdale R.D."/>
            <person name="Liu E.T."/>
            <person name="Brusic V."/>
            <person name="Quackenbush J."/>
            <person name="Wahlestedt C."/>
            <person name="Mattick J.S."/>
            <person name="Hume D.A."/>
            <person name="Kai C."/>
            <person name="Sasaki D."/>
            <person name="Tomaru Y."/>
            <person name="Fukuda S."/>
            <person name="Kanamori-Katayama M."/>
            <person name="Suzuki M."/>
            <person name="Aoki J."/>
            <person name="Arakawa T."/>
            <person name="Iida J."/>
            <person name="Imamura K."/>
            <person name="Itoh M."/>
            <person name="Kato T."/>
            <person name="Kawaji H."/>
            <person name="Kawagashira N."/>
            <person name="Kawashima T."/>
            <person name="Kojima M."/>
            <person name="Kondo S."/>
            <person name="Konno H."/>
            <person name="Nakano K."/>
            <person name="Ninomiya N."/>
            <person name="Nishio T."/>
            <person name="Okada M."/>
            <person name="Plessy C."/>
            <person name="Shibata K."/>
            <person name="Shiraki T."/>
            <person name="Suzuki S."/>
            <person name="Tagami M."/>
            <person name="Waki K."/>
            <person name="Watahiki A."/>
            <person name="Okamura-Oho Y."/>
            <person name="Suzuki H."/>
            <person name="Kawai J."/>
            <person name="Hayashizaki Y."/>
        </authorList>
    </citation>
    <scope>NUCLEOTIDE SEQUENCE [LARGE SCALE MRNA]</scope>
    <source>
        <strain>C57BL/6J</strain>
        <tissue>Head</tissue>
        <tissue>Hypothalamus</tissue>
    </source>
</reference>
<reference key="3">
    <citation type="journal article" date="2004" name="Genome Res.">
        <title>The status, quality, and expansion of the NIH full-length cDNA project: the Mammalian Gene Collection (MGC).</title>
        <authorList>
            <consortium name="The MGC Project Team"/>
        </authorList>
    </citation>
    <scope>NUCLEOTIDE SEQUENCE [LARGE SCALE MRNA]</scope>
    <source>
        <strain>C57BL/6J</strain>
        <tissue>Brain</tissue>
        <tissue>Retina</tissue>
    </source>
</reference>
<reference key="4">
    <citation type="journal article" date="2003" name="Proc. Natl. Acad. Sci. U.S.A.">
        <title>Mutations in bone morphogenetic protein receptor 1B cause brachydactyly type A2.</title>
        <authorList>
            <person name="Lehmann K."/>
            <person name="Seemann P."/>
            <person name="Stricker S."/>
            <person name="Sammar M."/>
            <person name="Meyer B."/>
            <person name="Suering K."/>
            <person name="Majewski F."/>
            <person name="Tinschert S."/>
            <person name="Grzeschik K.-H."/>
            <person name="Mueller D."/>
            <person name="Knaus P."/>
            <person name="Nuernberg P."/>
            <person name="Mundlos S."/>
        </authorList>
    </citation>
    <scope>CATALYTIC ACTIVITY</scope>
    <scope>AUTOPHOSPHORYLATION</scope>
    <scope>MUTAGENESIS OF ILE-200 AND ARG-486</scope>
    <scope>SUBCELLULAR LOCATION</scope>
</reference>
<reference key="5">
    <citation type="journal article" date="2013" name="PLoS Genet.">
        <title>A GDF5 point mutation strikes twice--causing BDA1 and SYNS2.</title>
        <authorList>
            <person name="Degenkolbe E."/>
            <person name="Konig J."/>
            <person name="Zimmer J."/>
            <person name="Walther M."/>
            <person name="Reissner C."/>
            <person name="Nickel J."/>
            <person name="Ploger F."/>
            <person name="Raspopovic J."/>
            <person name="Sharpe J."/>
            <person name="Dathe K."/>
            <person name="Hecht J.T."/>
            <person name="Mundlos S."/>
            <person name="Doelken S.C."/>
            <person name="Seemann P."/>
        </authorList>
    </citation>
    <scope>FUNCTION</scope>
</reference>
<reference key="6">
    <citation type="journal article" date="2014" name="Eur. J. Hum. Genet.">
        <title>Homozygous missense and nonsense mutations in BMPR1B cause acromesomelic chondrodysplasia-type Grebe.</title>
        <authorList>
            <person name="Graul-Neumann L.M."/>
            <person name="Deichsel A."/>
            <person name="Wille U."/>
            <person name="Kakar N."/>
            <person name="Koll R."/>
            <person name="Bassir C."/>
            <person name="Ahmad J."/>
            <person name="Cormier-Daire V."/>
            <person name="Mundlos S."/>
            <person name="Kubisch C."/>
            <person name="Borck G."/>
            <person name="Klopocki E."/>
            <person name="Mueller T.D."/>
            <person name="Doelken S.C."/>
            <person name="Seemann P."/>
        </authorList>
    </citation>
    <scope>FUNCTION</scope>
    <scope>SUBCELLULAR LOCATION</scope>
</reference>
<reference key="7">
    <citation type="journal article" date="2015" name="Orphanet J. Rare Dis.">
        <title>A hypomorphic BMPR1B mutation causes du Pan acromesomelic dysplasia.</title>
        <authorList>
            <person name="Stange K."/>
            <person name="Desir J."/>
            <person name="Kakar N."/>
            <person name="Mueller T.D."/>
            <person name="Budde B.S."/>
            <person name="Gordon C.T."/>
            <person name="Horn D."/>
            <person name="Seemann P."/>
            <person name="Borck G."/>
        </authorList>
    </citation>
    <scope>FUNCTION</scope>
    <scope>SUBCELLULAR LOCATION</scope>
</reference>
<reference key="8">
    <citation type="journal article" date="2009" name="EMBO J.">
        <title>Crystal structure analysis reveals a spring-loaded latch as molecular mechanism for GDF-5-type I receptor specificity.</title>
        <authorList>
            <person name="Kotzsch A."/>
            <person name="Nickel J."/>
            <person name="Seher A."/>
            <person name="Sebald W."/>
            <person name="Muller T.D."/>
        </authorList>
    </citation>
    <scope>X-RAY CRYSTALLOGRAPHY (2.1 ANGSTROMS) OF 14-126 IN COMPLEX WITH HUMAN GDF5</scope>
    <scope>DISULFIDE BONDS</scope>
</reference>
<protein>
    <recommendedName>
        <fullName>Bone morphogenetic protein receptor type-1B</fullName>
        <shortName>BMP type-1B receptor</shortName>
        <shortName>BMPR-1B</shortName>
        <ecNumber evidence="14">2.7.11.30</ecNumber>
    </recommendedName>
    <alternativeName>
        <fullName>Activin receptor-like kinase 6</fullName>
        <shortName>ALK-6</shortName>
    </alternativeName>
    <alternativeName>
        <fullName>Serine/threonine-protein kinase receptor R6</fullName>
        <shortName>SKR6</shortName>
    </alternativeName>
    <cdAntigenName>CDw293</cdAntigenName>
</protein>
<organism>
    <name type="scientific">Mus musculus</name>
    <name type="common">Mouse</name>
    <dbReference type="NCBI Taxonomy" id="10090"/>
    <lineage>
        <taxon>Eukaryota</taxon>
        <taxon>Metazoa</taxon>
        <taxon>Chordata</taxon>
        <taxon>Craniata</taxon>
        <taxon>Vertebrata</taxon>
        <taxon>Euteleostomi</taxon>
        <taxon>Mammalia</taxon>
        <taxon>Eutheria</taxon>
        <taxon>Euarchontoglires</taxon>
        <taxon>Glires</taxon>
        <taxon>Rodentia</taxon>
        <taxon>Myomorpha</taxon>
        <taxon>Muroidea</taxon>
        <taxon>Muridae</taxon>
        <taxon>Murinae</taxon>
        <taxon>Mus</taxon>
        <taxon>Mus</taxon>
    </lineage>
</organism>
<name>BMR1B_MOUSE</name>
<feature type="signal peptide" evidence="3">
    <location>
        <begin position="1"/>
        <end position="13"/>
    </location>
</feature>
<feature type="chain" id="PRO_0000024413" description="Bone morphogenetic protein receptor type-1B">
    <location>
        <begin position="14"/>
        <end position="502"/>
    </location>
</feature>
<feature type="topological domain" description="Extracellular" evidence="3">
    <location>
        <begin position="14"/>
        <end position="126"/>
    </location>
</feature>
<feature type="transmembrane region" description="Helical" evidence="3">
    <location>
        <begin position="127"/>
        <end position="148"/>
    </location>
</feature>
<feature type="topological domain" description="Cytoplasmic" evidence="3">
    <location>
        <begin position="149"/>
        <end position="502"/>
    </location>
</feature>
<feature type="domain" description="GS" evidence="5">
    <location>
        <begin position="174"/>
        <end position="203"/>
    </location>
</feature>
<feature type="domain" description="Protein kinase" evidence="4">
    <location>
        <begin position="204"/>
        <end position="494"/>
    </location>
</feature>
<feature type="region of interest" description="Disordered" evidence="7">
    <location>
        <begin position="1"/>
        <end position="24"/>
    </location>
</feature>
<feature type="active site" description="Proton acceptor" evidence="4 6">
    <location>
        <position position="332"/>
    </location>
</feature>
<feature type="binding site" evidence="4">
    <location>
        <begin position="210"/>
        <end position="218"/>
    </location>
    <ligand>
        <name>ATP</name>
        <dbReference type="ChEBI" id="CHEBI:30616"/>
    </ligand>
</feature>
<feature type="binding site" evidence="4">
    <location>
        <position position="231"/>
    </location>
    <ligand>
        <name>ATP</name>
        <dbReference type="ChEBI" id="CHEBI:30616"/>
    </ligand>
</feature>
<feature type="disulfide bond" evidence="9">
    <location>
        <begin position="32"/>
        <end position="53"/>
    </location>
</feature>
<feature type="disulfide bond" evidence="9">
    <location>
        <begin position="34"/>
        <end position="38"/>
    </location>
</feature>
<feature type="disulfide bond" evidence="9">
    <location>
        <begin position="47"/>
        <end position="71"/>
    </location>
</feature>
<feature type="disulfide bond" evidence="9">
    <location>
        <begin position="81"/>
        <end position="95"/>
    </location>
</feature>
<feature type="disulfide bond" evidence="9">
    <location>
        <begin position="96"/>
        <end position="102"/>
    </location>
</feature>
<feature type="mutagenesis site" description="Loss of kinase activity. No effect on cell membrane location." evidence="8">
    <original>I</original>
    <variation>K</variation>
    <location>
        <position position="200"/>
    </location>
</feature>
<feature type="mutagenesis site" description="No effect on kinase activity. No effect on cell membrane location." evidence="8">
    <original>R</original>
    <variation>W</variation>
    <location>
        <position position="486"/>
    </location>
</feature>
<feature type="strand" evidence="15">
    <location>
        <begin position="30"/>
        <end position="33"/>
    </location>
</feature>
<feature type="strand" evidence="15">
    <location>
        <begin position="35"/>
        <end position="37"/>
    </location>
</feature>
<feature type="strand" evidence="15">
    <location>
        <begin position="46"/>
        <end position="59"/>
    </location>
</feature>
<feature type="strand" evidence="15">
    <location>
        <begin position="64"/>
        <end position="72"/>
    </location>
</feature>
<feature type="helix" evidence="15">
    <location>
        <begin position="77"/>
        <end position="80"/>
    </location>
</feature>
<feature type="strand" evidence="15">
    <location>
        <begin position="91"/>
        <end position="96"/>
    </location>
</feature>
<feature type="helix" evidence="15">
    <location>
        <begin position="102"/>
        <end position="105"/>
    </location>
</feature>
<proteinExistence type="evidence at protein level"/>
<accession>P36898</accession>
<accession>Q3TRF2</accession>
<comment type="function">
    <text evidence="9 10 12">On ligand binding, forms a receptor complex consisting of two type II and two type I transmembrane serine/threonine kinases. Type II receptors phosphorylate and activate type I receptors which autophosphorylate, then bind and activate SMAD transcriptional regulators. Receptor for BMP7/OP-1. Receptor for GDF5 (PubMed:19229295, PubMed:26105076). Positively regulates chondrocyte differentiation through GDF5 interaction (PubMed:24098149).</text>
</comment>
<comment type="catalytic activity">
    <reaction evidence="14">
        <text>L-threonyl-[receptor-protein] + ATP = O-phospho-L-threonyl-[receptor-protein] + ADP + H(+)</text>
        <dbReference type="Rhea" id="RHEA:44880"/>
        <dbReference type="Rhea" id="RHEA-COMP:11024"/>
        <dbReference type="Rhea" id="RHEA-COMP:11025"/>
        <dbReference type="ChEBI" id="CHEBI:15378"/>
        <dbReference type="ChEBI" id="CHEBI:30013"/>
        <dbReference type="ChEBI" id="CHEBI:30616"/>
        <dbReference type="ChEBI" id="CHEBI:61977"/>
        <dbReference type="ChEBI" id="CHEBI:456216"/>
        <dbReference type="EC" id="2.7.11.30"/>
    </reaction>
    <physiologicalReaction direction="left-to-right" evidence="14">
        <dbReference type="Rhea" id="RHEA:44881"/>
    </physiologicalReaction>
</comment>
<comment type="catalytic activity">
    <reaction evidence="14">
        <text>L-seryl-[receptor-protein] + ATP = O-phospho-L-seryl-[receptor-protein] + ADP + H(+)</text>
        <dbReference type="Rhea" id="RHEA:18673"/>
        <dbReference type="Rhea" id="RHEA-COMP:11022"/>
        <dbReference type="Rhea" id="RHEA-COMP:11023"/>
        <dbReference type="ChEBI" id="CHEBI:15378"/>
        <dbReference type="ChEBI" id="CHEBI:29999"/>
        <dbReference type="ChEBI" id="CHEBI:30616"/>
        <dbReference type="ChEBI" id="CHEBI:83421"/>
        <dbReference type="ChEBI" id="CHEBI:456216"/>
        <dbReference type="EC" id="2.7.11.30"/>
    </reaction>
    <physiologicalReaction direction="left-to-right" evidence="14">
        <dbReference type="Rhea" id="RHEA:18674"/>
    </physiologicalReaction>
</comment>
<comment type="cofactor">
    <cofactor evidence="1">
        <name>Mg(2+)</name>
        <dbReference type="ChEBI" id="CHEBI:18420"/>
    </cofactor>
    <cofactor evidence="1">
        <name>Mn(2+)</name>
        <dbReference type="ChEBI" id="CHEBI:29035"/>
    </cofactor>
</comment>
<comment type="subunit">
    <text evidence="2">Interacts with high affinity with GDF5; positively regulates chondrocyte differentiation (By similarity). Interacts with SCUBE3 (By similarity). Interacts with TSC22D1/TSC-22 (By similarity). Interacts with TGFBR3 (By similarity).</text>
</comment>
<comment type="interaction">
    <interactant intactId="EBI-7107883">
        <id>P36898</id>
    </interactant>
    <interactant intactId="EBI-4321242">
        <id>O35182</id>
        <label>Smad6</label>
    </interactant>
    <organismsDiffer>false</organismsDiffer>
    <experiments>2</experiments>
</comment>
<comment type="subcellular location">
    <subcellularLocation>
        <location evidence="8 11 12">Cell membrane</location>
        <topology evidence="3">Single-pass type I membrane protein</topology>
    </subcellularLocation>
</comment>
<comment type="PTM">
    <text evidence="8">Autophosphorylated.</text>
</comment>
<comment type="similarity">
    <text evidence="13">Belongs to the protein kinase superfamily. TKL Ser/Thr protein kinase family. TGFB receptor subfamily.</text>
</comment>
<sequence length="502" mass="56944">MLLRSSGKLNVGTKKEDGESTAPTPRPKILRCKCHHHCPEDSVNNICSTDGYCFTMIEEDDSGMPVVTSGCLGLEGSDFQCRDTPIPHQRRSIECCTERNECNKDLHPTLPPLKDRDFVDGPIHHKALLISVTVCSLLLVLIILFCYFRYKRQEARPRYSIGLEQDETYIPPGESLRDLIEQSQSSGSGSGLPLLVQRTIAKQIQMVKQIGKGRYGEVWMGKWRGEKVAVKVFFTTEEASWFRETEIYQTVLMRHENILGFIAADIKGTGSWTQLYLITDYHENGSLYDYLKSTTLDAKSMLKLAYSSVSGLCHLHTEIFSTQGKPAIAHRDLKSKNILVKKNGTCCIADLGLAVKFISDTNEVDIPPNTRVGTKRYMPPEVLDESLNRNHFQSYIMADMYSFGLILWEIARRCVSGGIVEEYQLPYHDLVPSDPSYEDMREIVCMKKLRPSFPNRWSSDECLRQMGKLMTECWAQNPASRLTALRVKKTLAKMSESQDIKL</sequence>